<keyword id="KW-1185">Reference proteome</keyword>
<keyword id="KW-0687">Ribonucleoprotein</keyword>
<keyword id="KW-0689">Ribosomal protein</keyword>
<keyword id="KW-0694">RNA-binding</keyword>
<keyword id="KW-0699">rRNA-binding</keyword>
<name>RS5_CORA7</name>
<organism>
    <name type="scientific">Corynebacterium aurimucosum (strain ATCC 700975 / DSM 44827 / CIP 107346 / CN-1)</name>
    <name type="common">Corynebacterium nigricans</name>
    <dbReference type="NCBI Taxonomy" id="548476"/>
    <lineage>
        <taxon>Bacteria</taxon>
        <taxon>Bacillati</taxon>
        <taxon>Actinomycetota</taxon>
        <taxon>Actinomycetes</taxon>
        <taxon>Mycobacteriales</taxon>
        <taxon>Corynebacteriaceae</taxon>
        <taxon>Corynebacterium</taxon>
    </lineage>
</organism>
<feature type="chain" id="PRO_1000165448" description="Small ribosomal subunit protein uS5">
    <location>
        <begin position="1"/>
        <end position="208"/>
    </location>
</feature>
<feature type="domain" description="S5 DRBM" evidence="1">
    <location>
        <begin position="41"/>
        <end position="104"/>
    </location>
</feature>
<feature type="region of interest" description="Disordered" evidence="2">
    <location>
        <begin position="1"/>
        <end position="38"/>
    </location>
</feature>
<feature type="compositionally biased region" description="Basic and acidic residues" evidence="2">
    <location>
        <begin position="1"/>
        <end position="21"/>
    </location>
</feature>
<comment type="function">
    <text evidence="1">With S4 and S12 plays an important role in translational accuracy.</text>
</comment>
<comment type="function">
    <text evidence="1">Located at the back of the 30S subunit body where it stabilizes the conformation of the head with respect to the body.</text>
</comment>
<comment type="subunit">
    <text evidence="1">Part of the 30S ribosomal subunit. Contacts proteins S4 and S8.</text>
</comment>
<comment type="domain">
    <text>The N-terminal domain interacts with the head of the 30S subunit; the C-terminal domain interacts with the body and contacts protein S4. The interaction surface between S4 and S5 is involved in control of translational fidelity.</text>
</comment>
<comment type="similarity">
    <text evidence="1">Belongs to the universal ribosomal protein uS5 family.</text>
</comment>
<sequence length="208" mass="22324">MSDREQRDGGRSAENNNDRKGRNNGRRNDRRNHQDNERDKYIERVVTINRVAKTVKGGRNMSFTALVVVGDGQGMVGVGYGKAKEVPAAIQKGAEEARKNFFRVPMIAGTITHPVEGRDAAGIVMMKPAAPGTGVIAGGAARPVLECAGVQDILSKSLGSDNALNVVRATVDGLKQLVRPEEVAARRGKSLEEVAPAQMLRKRAGQEA</sequence>
<proteinExistence type="inferred from homology"/>
<accession>C3PL26</accession>
<dbReference type="EMBL" id="CP001601">
    <property type="protein sequence ID" value="ACP32030.1"/>
    <property type="molecule type" value="Genomic_DNA"/>
</dbReference>
<dbReference type="RefSeq" id="WP_010189568.1">
    <property type="nucleotide sequence ID" value="NZ_ACLH01000063.1"/>
</dbReference>
<dbReference type="SMR" id="C3PL26"/>
<dbReference type="STRING" id="548476.cauri_0431"/>
<dbReference type="GeneID" id="31923048"/>
<dbReference type="KEGG" id="car:cauri_0431"/>
<dbReference type="eggNOG" id="COG0098">
    <property type="taxonomic scope" value="Bacteria"/>
</dbReference>
<dbReference type="HOGENOM" id="CLU_065898_1_0_11"/>
<dbReference type="OrthoDB" id="9809045at2"/>
<dbReference type="Proteomes" id="UP000002077">
    <property type="component" value="Chromosome"/>
</dbReference>
<dbReference type="GO" id="GO:0015935">
    <property type="term" value="C:small ribosomal subunit"/>
    <property type="evidence" value="ECO:0007669"/>
    <property type="project" value="InterPro"/>
</dbReference>
<dbReference type="GO" id="GO:0019843">
    <property type="term" value="F:rRNA binding"/>
    <property type="evidence" value="ECO:0007669"/>
    <property type="project" value="UniProtKB-UniRule"/>
</dbReference>
<dbReference type="GO" id="GO:0003735">
    <property type="term" value="F:structural constituent of ribosome"/>
    <property type="evidence" value="ECO:0007669"/>
    <property type="project" value="InterPro"/>
</dbReference>
<dbReference type="GO" id="GO:0006412">
    <property type="term" value="P:translation"/>
    <property type="evidence" value="ECO:0007669"/>
    <property type="project" value="UniProtKB-UniRule"/>
</dbReference>
<dbReference type="FunFam" id="3.30.160.20:FF:000001">
    <property type="entry name" value="30S ribosomal protein S5"/>
    <property type="match status" value="1"/>
</dbReference>
<dbReference type="FunFam" id="3.30.230.10:FF:000002">
    <property type="entry name" value="30S ribosomal protein S5"/>
    <property type="match status" value="1"/>
</dbReference>
<dbReference type="Gene3D" id="3.30.160.20">
    <property type="match status" value="1"/>
</dbReference>
<dbReference type="Gene3D" id="3.30.230.10">
    <property type="match status" value="1"/>
</dbReference>
<dbReference type="HAMAP" id="MF_01307_B">
    <property type="entry name" value="Ribosomal_uS5_B"/>
    <property type="match status" value="1"/>
</dbReference>
<dbReference type="InterPro" id="IPR020568">
    <property type="entry name" value="Ribosomal_Su5_D2-typ_SF"/>
</dbReference>
<dbReference type="InterPro" id="IPR000851">
    <property type="entry name" value="Ribosomal_uS5"/>
</dbReference>
<dbReference type="InterPro" id="IPR005712">
    <property type="entry name" value="Ribosomal_uS5_bac-type"/>
</dbReference>
<dbReference type="InterPro" id="IPR005324">
    <property type="entry name" value="Ribosomal_uS5_C"/>
</dbReference>
<dbReference type="InterPro" id="IPR013810">
    <property type="entry name" value="Ribosomal_uS5_N"/>
</dbReference>
<dbReference type="InterPro" id="IPR018192">
    <property type="entry name" value="Ribosomal_uS5_N_CS"/>
</dbReference>
<dbReference type="InterPro" id="IPR014721">
    <property type="entry name" value="Ribsml_uS5_D2-typ_fold_subgr"/>
</dbReference>
<dbReference type="NCBIfam" id="TIGR01021">
    <property type="entry name" value="rpsE_bact"/>
    <property type="match status" value="1"/>
</dbReference>
<dbReference type="PANTHER" id="PTHR48277">
    <property type="entry name" value="MITOCHONDRIAL RIBOSOMAL PROTEIN S5"/>
    <property type="match status" value="1"/>
</dbReference>
<dbReference type="PANTHER" id="PTHR48277:SF1">
    <property type="entry name" value="MITOCHONDRIAL RIBOSOMAL PROTEIN S5"/>
    <property type="match status" value="1"/>
</dbReference>
<dbReference type="Pfam" id="PF00333">
    <property type="entry name" value="Ribosomal_S5"/>
    <property type="match status" value="1"/>
</dbReference>
<dbReference type="Pfam" id="PF03719">
    <property type="entry name" value="Ribosomal_S5_C"/>
    <property type="match status" value="1"/>
</dbReference>
<dbReference type="SUPFAM" id="SSF54768">
    <property type="entry name" value="dsRNA-binding domain-like"/>
    <property type="match status" value="1"/>
</dbReference>
<dbReference type="SUPFAM" id="SSF54211">
    <property type="entry name" value="Ribosomal protein S5 domain 2-like"/>
    <property type="match status" value="1"/>
</dbReference>
<dbReference type="PROSITE" id="PS00585">
    <property type="entry name" value="RIBOSOMAL_S5"/>
    <property type="match status" value="1"/>
</dbReference>
<dbReference type="PROSITE" id="PS50881">
    <property type="entry name" value="S5_DSRBD"/>
    <property type="match status" value="1"/>
</dbReference>
<gene>
    <name evidence="1" type="primary">rpsE</name>
    <name type="ordered locus">cauri_0431</name>
</gene>
<reference key="1">
    <citation type="journal article" date="2010" name="BMC Genomics">
        <title>Complete genome sequence and lifestyle of black-pigmented Corynebacterium aurimucosum ATCC 700975 (formerly C. nigricans CN-1) isolated from a vaginal swab of a woman with spontaneous abortion.</title>
        <authorList>
            <person name="Trost E."/>
            <person name="Gotker S."/>
            <person name="Schneider J."/>
            <person name="Schneiker-Bekel S."/>
            <person name="Szczepanowski R."/>
            <person name="Tilker A."/>
            <person name="Viehoever P."/>
            <person name="Arnold W."/>
            <person name="Bekel T."/>
            <person name="Blom J."/>
            <person name="Gartemann K.H."/>
            <person name="Linke B."/>
            <person name="Goesmann A."/>
            <person name="Puhler A."/>
            <person name="Shukla S.K."/>
            <person name="Tauch A."/>
        </authorList>
    </citation>
    <scope>NUCLEOTIDE SEQUENCE [LARGE SCALE GENOMIC DNA]</scope>
    <source>
        <strain>ATCC 700975 / DSM 44827 / CIP 107346 / CN-1</strain>
    </source>
</reference>
<protein>
    <recommendedName>
        <fullName evidence="1">Small ribosomal subunit protein uS5</fullName>
    </recommendedName>
    <alternativeName>
        <fullName evidence="3">30S ribosomal protein S5</fullName>
    </alternativeName>
</protein>
<evidence type="ECO:0000255" key="1">
    <source>
        <dbReference type="HAMAP-Rule" id="MF_01307"/>
    </source>
</evidence>
<evidence type="ECO:0000256" key="2">
    <source>
        <dbReference type="SAM" id="MobiDB-lite"/>
    </source>
</evidence>
<evidence type="ECO:0000305" key="3"/>